<name>FBXL3_HUMAN</name>
<gene>
    <name type="primary">FBXL3</name>
    <name type="synonym">FBL3A</name>
    <name type="synonym">FBXL3A</name>
</gene>
<feature type="chain" id="PRO_0000119842" description="F-box/LRR-repeat protein 3">
    <location>
        <begin position="1"/>
        <end position="428"/>
    </location>
</feature>
<feature type="domain" description="F-box">
    <location>
        <begin position="34"/>
        <end position="81"/>
    </location>
</feature>
<feature type="repeat" description="LRR 1">
    <location>
        <begin position="119"/>
        <end position="146"/>
    </location>
</feature>
<feature type="repeat" description="LRR 2">
    <location>
        <begin position="181"/>
        <end position="207"/>
    </location>
</feature>
<feature type="repeat" description="LRR 3">
    <location>
        <begin position="208"/>
        <end position="233"/>
    </location>
</feature>
<feature type="repeat" description="LRR 4">
    <location>
        <begin position="234"/>
        <end position="259"/>
    </location>
</feature>
<feature type="repeat" description="LRR 5">
    <location>
        <begin position="316"/>
        <end position="341"/>
    </location>
</feature>
<feature type="repeat" description="LRR 6">
    <location>
        <begin position="343"/>
        <end position="368"/>
    </location>
</feature>
<feature type="repeat" description="LRR 7">
    <location>
        <begin position="369"/>
        <end position="394"/>
    </location>
</feature>
<feature type="region of interest" description="Disordered" evidence="2">
    <location>
        <begin position="1"/>
        <end position="27"/>
    </location>
</feature>
<feature type="compositionally biased region" description="Basic and acidic residues" evidence="2">
    <location>
        <begin position="1"/>
        <end position="21"/>
    </location>
</feature>
<feature type="sequence variant" id="VAR_082209" description="In IDDSFAS." evidence="7">
    <location>
        <begin position="149"/>
        <end position="428"/>
    </location>
</feature>
<feature type="sequence variant" id="VAR_082210" description="In IDDSFAS; dbSNP:rs1566225872." evidence="7">
    <original>C</original>
    <variation>R</variation>
    <location>
        <position position="358"/>
    </location>
</feature>
<feature type="mutagenesis site" description="Loss of binding with CRY1." evidence="4">
    <original>C</original>
    <variation>A</variation>
    <location>
        <position position="358"/>
    </location>
</feature>
<feature type="mutagenesis site" description="Decrease in binding efficiency with CRY2 and of CRY2 ubiquitination efficiency, loss of binding with CRY1." evidence="4">
    <original>C</original>
    <variation>S</variation>
    <location>
        <position position="358"/>
    </location>
</feature>
<feature type="sequence conflict" description="In Ref. 2; AAF37383." evidence="8" ref="2">
    <original>R</original>
    <variation>H</variation>
    <location>
        <position position="10"/>
    </location>
</feature>
<feature type="sequence conflict" description="In Ref. 2; AAF37383." evidence="8" ref="2">
    <original>S</original>
    <variation>A</variation>
    <location>
        <position position="13"/>
    </location>
</feature>
<feature type="sequence conflict" description="In Ref. 2; AAF37383." evidence="8" ref="2">
    <original>R</original>
    <variation>A</variation>
    <location>
        <position position="353"/>
    </location>
</feature>
<feature type="sequence conflict" description="In Ref. 3; BAG37051." evidence="8" ref="3">
    <original>I</original>
    <variation>V</variation>
    <location>
        <position position="364"/>
    </location>
</feature>
<feature type="sequence conflict" description="In Ref. 3; BAG37051." evidence="8" ref="3">
    <original>V</original>
    <variation>A</variation>
    <location>
        <position position="412"/>
    </location>
</feature>
<feature type="helix" evidence="9">
    <location>
        <begin position="42"/>
        <end position="48"/>
    </location>
</feature>
<feature type="helix" evidence="9">
    <location>
        <begin position="53"/>
        <end position="59"/>
    </location>
</feature>
<feature type="helix" evidence="9">
    <location>
        <begin position="64"/>
        <end position="67"/>
    </location>
</feature>
<feature type="turn" evidence="9">
    <location>
        <begin position="68"/>
        <end position="71"/>
    </location>
</feature>
<feature type="helix" evidence="9">
    <location>
        <begin position="73"/>
        <end position="76"/>
    </location>
</feature>
<feature type="strand" evidence="9">
    <location>
        <begin position="77"/>
        <end position="83"/>
    </location>
</feature>
<feature type="turn" evidence="9">
    <location>
        <begin position="86"/>
        <end position="88"/>
    </location>
</feature>
<feature type="strand" evidence="9">
    <location>
        <begin position="89"/>
        <end position="91"/>
    </location>
</feature>
<feature type="helix" evidence="9">
    <location>
        <begin position="96"/>
        <end position="106"/>
    </location>
</feature>
<feature type="turn" evidence="9">
    <location>
        <begin position="107"/>
        <end position="109"/>
    </location>
</feature>
<feature type="strand" evidence="9">
    <location>
        <begin position="112"/>
        <end position="117"/>
    </location>
</feature>
<feature type="helix" evidence="9">
    <location>
        <begin position="121"/>
        <end position="131"/>
    </location>
</feature>
<feature type="strand" evidence="9">
    <location>
        <begin position="140"/>
        <end position="149"/>
    </location>
</feature>
<feature type="helix" evidence="9">
    <location>
        <begin position="151"/>
        <end position="154"/>
    </location>
</feature>
<feature type="helix" evidence="9">
    <location>
        <begin position="157"/>
        <end position="170"/>
    </location>
</feature>
<feature type="strand" evidence="9">
    <location>
        <begin position="176"/>
        <end position="178"/>
    </location>
</feature>
<feature type="helix" evidence="9">
    <location>
        <begin position="186"/>
        <end position="196"/>
    </location>
</feature>
<feature type="turn" evidence="9">
    <location>
        <begin position="197"/>
        <end position="199"/>
    </location>
</feature>
<feature type="strand" evidence="9">
    <location>
        <begin position="202"/>
        <end position="204"/>
    </location>
</feature>
<feature type="helix" evidence="9">
    <location>
        <begin position="213"/>
        <end position="222"/>
    </location>
</feature>
<feature type="strand" evidence="9">
    <location>
        <begin position="228"/>
        <end position="232"/>
    </location>
</feature>
<feature type="helix" evidence="9">
    <location>
        <begin position="233"/>
        <end position="235"/>
    </location>
</feature>
<feature type="helix" evidence="9">
    <location>
        <begin position="238"/>
        <end position="245"/>
    </location>
</feature>
<feature type="strand" evidence="9">
    <location>
        <begin position="246"/>
        <end position="249"/>
    </location>
</feature>
<feature type="strand" evidence="9">
    <location>
        <begin position="253"/>
        <end position="260"/>
    </location>
</feature>
<feature type="helix" evidence="9">
    <location>
        <begin position="274"/>
        <end position="283"/>
    </location>
</feature>
<feature type="strand" evidence="9">
    <location>
        <begin position="288"/>
        <end position="294"/>
    </location>
</feature>
<feature type="strand" evidence="9">
    <location>
        <begin position="303"/>
        <end position="306"/>
    </location>
</feature>
<feature type="strand" evidence="9">
    <location>
        <begin position="312"/>
        <end position="317"/>
    </location>
</feature>
<feature type="helix" evidence="9">
    <location>
        <begin position="321"/>
        <end position="328"/>
    </location>
</feature>
<feature type="strand" evidence="9">
    <location>
        <begin position="335"/>
        <end position="340"/>
    </location>
</feature>
<feature type="helix" evidence="9">
    <location>
        <begin position="348"/>
        <end position="357"/>
    </location>
</feature>
<feature type="strand" evidence="9">
    <location>
        <begin position="363"/>
        <end position="366"/>
    </location>
</feature>
<feature type="helix" evidence="9">
    <location>
        <begin position="373"/>
        <end position="382"/>
    </location>
</feature>
<feature type="helix" evidence="9">
    <location>
        <begin position="384"/>
        <end position="386"/>
    </location>
</feature>
<feature type="strand" evidence="9">
    <location>
        <begin position="388"/>
        <end position="393"/>
    </location>
</feature>
<feature type="helix" evidence="9">
    <location>
        <begin position="394"/>
        <end position="396"/>
    </location>
</feature>
<feature type="helix" evidence="9">
    <location>
        <begin position="405"/>
        <end position="416"/>
    </location>
</feature>
<proteinExistence type="evidence at protein level"/>
<protein>
    <recommendedName>
        <fullName>F-box/LRR-repeat protein 3</fullName>
    </recommendedName>
    <alternativeName>
        <fullName>F-box and leucine-rich repeat protein 3A</fullName>
    </alternativeName>
    <alternativeName>
        <fullName>F-box/LRR-repeat protein 3A</fullName>
    </alternativeName>
</protein>
<keyword id="KW-0002">3D-structure</keyword>
<keyword id="KW-0090">Biological rhythms</keyword>
<keyword id="KW-0963">Cytoplasm</keyword>
<keyword id="KW-0225">Disease variant</keyword>
<keyword id="KW-0242">Dwarfism</keyword>
<keyword id="KW-0991">Intellectual disability</keyword>
<keyword id="KW-0433">Leucine-rich repeat</keyword>
<keyword id="KW-0539">Nucleus</keyword>
<keyword id="KW-1267">Proteomics identification</keyword>
<keyword id="KW-1185">Reference proteome</keyword>
<keyword id="KW-0677">Repeat</keyword>
<keyword id="KW-0833">Ubl conjugation pathway</keyword>
<organism>
    <name type="scientific">Homo sapiens</name>
    <name type="common">Human</name>
    <dbReference type="NCBI Taxonomy" id="9606"/>
    <lineage>
        <taxon>Eukaryota</taxon>
        <taxon>Metazoa</taxon>
        <taxon>Chordata</taxon>
        <taxon>Craniata</taxon>
        <taxon>Vertebrata</taxon>
        <taxon>Euteleostomi</taxon>
        <taxon>Mammalia</taxon>
        <taxon>Eutheria</taxon>
        <taxon>Euarchontoglires</taxon>
        <taxon>Primates</taxon>
        <taxon>Haplorrhini</taxon>
        <taxon>Catarrhini</taxon>
        <taxon>Hominidae</taxon>
        <taxon>Homo</taxon>
    </lineage>
</organism>
<sequence>MKRGGRDSDRNSSEEGTAEKSKKLRTTNEHSQTCDWGNLLQDIILQVFKYLPLLDRAHASQVCRNWNQVFHMPDLWRCFEFELNQPATSYLKATHPELIKQIIKRHSNHLQYVSFKVDSSKESAEAACDILSQLVNCSLKTLGLISTARPSFMDLPKSHFISALTVVFVNSKSLSSLKIDDTPVDDPSLKVLVANNSDTLKLLKMSSCPHVSPAGILCVADQCHGLRELALNYHLLSDELLLALSSEKHVRLEHLRIDVVSENPGQTHFHTIQKSSWDAFIRHSPKVNLVMYFFLYEEEFDPFFRYEIPATHLYFGRSVSKDVLGRVGMTCPRLVELVVCANGLRPLDEELIRIAERCKNLSAIGLGECEVSCSAFVEFVKMCGGRLSQLSIMEEVLIPDQKYSLEQIHWEVSKHLGRVWFPDMMPTW</sequence>
<accession>Q9UKT7</accession>
<accession>B2RB04</accession>
<accession>Q9P122</accession>
<dbReference type="EMBL" id="AF129532">
    <property type="protein sequence ID" value="AAF04466.1"/>
    <property type="molecule type" value="mRNA"/>
</dbReference>
<dbReference type="EMBL" id="AF126028">
    <property type="protein sequence ID" value="AAF37383.1"/>
    <property type="molecule type" value="mRNA"/>
</dbReference>
<dbReference type="EMBL" id="AK314442">
    <property type="protein sequence ID" value="BAG37051.1"/>
    <property type="molecule type" value="mRNA"/>
</dbReference>
<dbReference type="EMBL" id="BC072448">
    <property type="protein sequence ID" value="AAH72448.1"/>
    <property type="molecule type" value="mRNA"/>
</dbReference>
<dbReference type="CCDS" id="CCDS9457.1"/>
<dbReference type="RefSeq" id="NP_036290.1">
    <property type="nucleotide sequence ID" value="NM_012158.4"/>
</dbReference>
<dbReference type="RefSeq" id="XP_005266393.1">
    <property type="nucleotide sequence ID" value="XM_005266336.2"/>
</dbReference>
<dbReference type="RefSeq" id="XP_054230398.1">
    <property type="nucleotide sequence ID" value="XM_054374423.1"/>
</dbReference>
<dbReference type="PDB" id="4I6J">
    <property type="method" value="X-ray"/>
    <property type="resolution" value="2.70 A"/>
    <property type="chains" value="B=1-428"/>
</dbReference>
<dbReference type="PDBsum" id="4I6J"/>
<dbReference type="SMR" id="Q9UKT7"/>
<dbReference type="BioGRID" id="117615">
    <property type="interactions" value="25"/>
</dbReference>
<dbReference type="ComplexPortal" id="CPX-3291">
    <property type="entry name" value="SCF E3 ubiquitin ligase complex, FBXL3 variant"/>
</dbReference>
<dbReference type="CORUM" id="Q9UKT7"/>
<dbReference type="DIP" id="DIP-40770N"/>
<dbReference type="FunCoup" id="Q9UKT7">
    <property type="interactions" value="2207"/>
</dbReference>
<dbReference type="IntAct" id="Q9UKT7">
    <property type="interactions" value="16"/>
</dbReference>
<dbReference type="MINT" id="Q9UKT7"/>
<dbReference type="STRING" id="9606.ENSP00000347834"/>
<dbReference type="iPTMnet" id="Q9UKT7"/>
<dbReference type="PhosphoSitePlus" id="Q9UKT7"/>
<dbReference type="BioMuta" id="FBXL3"/>
<dbReference type="DMDM" id="37537866"/>
<dbReference type="jPOST" id="Q9UKT7"/>
<dbReference type="MassIVE" id="Q9UKT7"/>
<dbReference type="PaxDb" id="9606-ENSP00000347834"/>
<dbReference type="PeptideAtlas" id="Q9UKT7"/>
<dbReference type="ProteomicsDB" id="84852"/>
<dbReference type="Pumba" id="Q9UKT7"/>
<dbReference type="Antibodypedia" id="24515">
    <property type="antibodies" value="211 antibodies from 31 providers"/>
</dbReference>
<dbReference type="DNASU" id="26224"/>
<dbReference type="Ensembl" id="ENST00000355619.10">
    <property type="protein sequence ID" value="ENSP00000347834.5"/>
    <property type="gene ID" value="ENSG00000005812.11"/>
</dbReference>
<dbReference type="GeneID" id="26224"/>
<dbReference type="KEGG" id="hsa:26224"/>
<dbReference type="MANE-Select" id="ENST00000355619.10">
    <property type="protein sequence ID" value="ENSP00000347834.5"/>
    <property type="RefSeq nucleotide sequence ID" value="NM_012158.4"/>
    <property type="RefSeq protein sequence ID" value="NP_036290.1"/>
</dbReference>
<dbReference type="UCSC" id="uc001vkd.4">
    <property type="organism name" value="human"/>
</dbReference>
<dbReference type="AGR" id="HGNC:13599"/>
<dbReference type="CTD" id="26224"/>
<dbReference type="DisGeNET" id="26224"/>
<dbReference type="GeneCards" id="FBXL3"/>
<dbReference type="HGNC" id="HGNC:13599">
    <property type="gene designation" value="FBXL3"/>
</dbReference>
<dbReference type="HPA" id="ENSG00000005812">
    <property type="expression patterns" value="Low tissue specificity"/>
</dbReference>
<dbReference type="MalaCards" id="FBXL3"/>
<dbReference type="MIM" id="605653">
    <property type="type" value="gene"/>
</dbReference>
<dbReference type="MIM" id="606220">
    <property type="type" value="phenotype"/>
</dbReference>
<dbReference type="neXtProt" id="NX_Q9UKT7"/>
<dbReference type="OpenTargets" id="ENSG00000005812"/>
<dbReference type="PharmGKB" id="PA28022"/>
<dbReference type="VEuPathDB" id="HostDB:ENSG00000005812"/>
<dbReference type="eggNOG" id="KOG1947">
    <property type="taxonomic scope" value="Eukaryota"/>
</dbReference>
<dbReference type="GeneTree" id="ENSGT00940000159395"/>
<dbReference type="HOGENOM" id="CLU_033637_0_0_1"/>
<dbReference type="InParanoid" id="Q9UKT7"/>
<dbReference type="OMA" id="RWNQAFH"/>
<dbReference type="OrthoDB" id="9974792at2759"/>
<dbReference type="PAN-GO" id="Q9UKT7">
    <property type="GO annotations" value="7 GO annotations based on evolutionary models"/>
</dbReference>
<dbReference type="PhylomeDB" id="Q9UKT7"/>
<dbReference type="TreeFam" id="TF352583"/>
<dbReference type="PathwayCommons" id="Q9UKT7"/>
<dbReference type="Reactome" id="R-HSA-390471">
    <property type="pathway name" value="Association of TriC/CCT with target proteins during biosynthesis"/>
</dbReference>
<dbReference type="Reactome" id="R-HSA-400253">
    <property type="pathway name" value="Circadian Clock"/>
</dbReference>
<dbReference type="Reactome" id="R-HSA-8951664">
    <property type="pathway name" value="Neddylation"/>
</dbReference>
<dbReference type="Reactome" id="R-HSA-983168">
    <property type="pathway name" value="Antigen processing: Ubiquitination &amp; Proteasome degradation"/>
</dbReference>
<dbReference type="SignaLink" id="Q9UKT7"/>
<dbReference type="SIGNOR" id="Q9UKT7"/>
<dbReference type="UniPathway" id="UPA00143"/>
<dbReference type="BioGRID-ORCS" id="26224">
    <property type="hits" value="15 hits in 1197 CRISPR screens"/>
</dbReference>
<dbReference type="ChiTaRS" id="FBXL3">
    <property type="organism name" value="human"/>
</dbReference>
<dbReference type="EvolutionaryTrace" id="Q9UKT7"/>
<dbReference type="GeneWiki" id="FBXL3"/>
<dbReference type="GenomeRNAi" id="26224"/>
<dbReference type="Pharos" id="Q9UKT7">
    <property type="development level" value="Tbio"/>
</dbReference>
<dbReference type="PRO" id="PR:Q9UKT7"/>
<dbReference type="Proteomes" id="UP000005640">
    <property type="component" value="Chromosome 13"/>
</dbReference>
<dbReference type="RNAct" id="Q9UKT7">
    <property type="molecule type" value="protein"/>
</dbReference>
<dbReference type="Bgee" id="ENSG00000005812">
    <property type="expression patterns" value="Expressed in cardiac muscle of right atrium and 193 other cell types or tissues"/>
</dbReference>
<dbReference type="ExpressionAtlas" id="Q9UKT7">
    <property type="expression patterns" value="baseline and differential"/>
</dbReference>
<dbReference type="GO" id="GO:0005829">
    <property type="term" value="C:cytosol"/>
    <property type="evidence" value="ECO:0000250"/>
    <property type="project" value="UniProtKB"/>
</dbReference>
<dbReference type="GO" id="GO:0016604">
    <property type="term" value="C:nuclear body"/>
    <property type="evidence" value="ECO:0000314"/>
    <property type="project" value="HPA"/>
</dbReference>
<dbReference type="GO" id="GO:0005634">
    <property type="term" value="C:nucleus"/>
    <property type="evidence" value="ECO:0000250"/>
    <property type="project" value="UniProtKB"/>
</dbReference>
<dbReference type="GO" id="GO:0019005">
    <property type="term" value="C:SCF ubiquitin ligase complex"/>
    <property type="evidence" value="ECO:0000314"/>
    <property type="project" value="UniProtKB"/>
</dbReference>
<dbReference type="GO" id="GO:0000151">
    <property type="term" value="C:ubiquitin ligase complex"/>
    <property type="evidence" value="ECO:0000303"/>
    <property type="project" value="UniProtKB"/>
</dbReference>
<dbReference type="GO" id="GO:0004842">
    <property type="term" value="F:ubiquitin-protein transferase activity"/>
    <property type="evidence" value="ECO:0000303"/>
    <property type="project" value="UniProtKB"/>
</dbReference>
<dbReference type="GO" id="GO:0043153">
    <property type="term" value="P:entrainment of circadian clock by photoperiod"/>
    <property type="evidence" value="ECO:0000250"/>
    <property type="project" value="UniProtKB"/>
</dbReference>
<dbReference type="GO" id="GO:0031648">
    <property type="term" value="P:protein destabilization"/>
    <property type="evidence" value="ECO:0000250"/>
    <property type="project" value="UniProtKB"/>
</dbReference>
<dbReference type="GO" id="GO:0016567">
    <property type="term" value="P:protein ubiquitination"/>
    <property type="evidence" value="ECO:0000250"/>
    <property type="project" value="UniProtKB"/>
</dbReference>
<dbReference type="GO" id="GO:0042752">
    <property type="term" value="P:regulation of circadian rhythm"/>
    <property type="evidence" value="ECO:0000315"/>
    <property type="project" value="UniProtKB"/>
</dbReference>
<dbReference type="GO" id="GO:0048511">
    <property type="term" value="P:rhythmic process"/>
    <property type="evidence" value="ECO:0007669"/>
    <property type="project" value="UniProtKB-KW"/>
</dbReference>
<dbReference type="GO" id="GO:0031146">
    <property type="term" value="P:SCF-dependent proteasomal ubiquitin-dependent protein catabolic process"/>
    <property type="evidence" value="ECO:0000314"/>
    <property type="project" value="UniProtKB"/>
</dbReference>
<dbReference type="CDD" id="cd22178">
    <property type="entry name" value="F-box_FBXL3"/>
    <property type="match status" value="1"/>
</dbReference>
<dbReference type="CDD" id="cd23957">
    <property type="entry name" value="FBXL3_LRR"/>
    <property type="match status" value="1"/>
</dbReference>
<dbReference type="FunFam" id="1.20.1280.50:FF:000005">
    <property type="entry name" value="F-box/LRR-repeat protein 3 isoform X1"/>
    <property type="match status" value="1"/>
</dbReference>
<dbReference type="FunFam" id="3.80.10.10:FF:000010">
    <property type="entry name" value="F-box/LRR-repeat protein 3 isoform X1"/>
    <property type="match status" value="1"/>
</dbReference>
<dbReference type="Gene3D" id="1.20.1280.50">
    <property type="match status" value="1"/>
</dbReference>
<dbReference type="Gene3D" id="3.80.10.10">
    <property type="entry name" value="Ribonuclease Inhibitor"/>
    <property type="match status" value="1"/>
</dbReference>
<dbReference type="InterPro" id="IPR036047">
    <property type="entry name" value="F-box-like_dom_sf"/>
</dbReference>
<dbReference type="InterPro" id="IPR001810">
    <property type="entry name" value="F-box_dom"/>
</dbReference>
<dbReference type="InterPro" id="IPR032675">
    <property type="entry name" value="LRR_dom_sf"/>
</dbReference>
<dbReference type="PANTHER" id="PTHR10224">
    <property type="entry name" value="ES1 PROTEIN HOMOLOG, MITOCHONDRIAL"/>
    <property type="match status" value="1"/>
</dbReference>
<dbReference type="PANTHER" id="PTHR10224:SF18">
    <property type="entry name" value="F-BOX AND LEUCINE RICH REPEAT PROTEIN 3"/>
    <property type="match status" value="1"/>
</dbReference>
<dbReference type="Pfam" id="PF12937">
    <property type="entry name" value="F-box-like"/>
    <property type="match status" value="1"/>
</dbReference>
<dbReference type="SMART" id="SM00256">
    <property type="entry name" value="FBOX"/>
    <property type="match status" value="1"/>
</dbReference>
<dbReference type="SUPFAM" id="SSF81383">
    <property type="entry name" value="F-box domain"/>
    <property type="match status" value="1"/>
</dbReference>
<dbReference type="SUPFAM" id="SSF52047">
    <property type="entry name" value="RNI-like"/>
    <property type="match status" value="1"/>
</dbReference>
<reference key="1">
    <citation type="journal article" date="1999" name="Curr. Biol.">
        <title>Identification of a family of human F-box proteins.</title>
        <authorList>
            <person name="Cenciarelli C."/>
            <person name="Chiaur D.S."/>
            <person name="Guardavaccaro D."/>
            <person name="Parks W."/>
            <person name="Vidal M."/>
            <person name="Pagano M."/>
        </authorList>
    </citation>
    <scope>NUCLEOTIDE SEQUENCE [MRNA]</scope>
    <scope>TISSUE SPECIFICITY</scope>
    <scope>SUBCELLULAR LOCATION</scope>
</reference>
<reference key="2">
    <citation type="submission" date="1999-02" db="EMBL/GenBank/DDBJ databases">
        <title>Transcript mapping on the CLN5 region on 13q22.</title>
        <authorList>
            <person name="Klockars T."/>
            <person name="Holmberg V."/>
            <person name="Savukoski M."/>
            <person name="Lander E.S."/>
            <person name="Peltonen L."/>
        </authorList>
    </citation>
    <scope>NUCLEOTIDE SEQUENCE [MRNA]</scope>
</reference>
<reference key="3">
    <citation type="journal article" date="2004" name="Nat. Genet.">
        <title>Complete sequencing and characterization of 21,243 full-length human cDNAs.</title>
        <authorList>
            <person name="Ota T."/>
            <person name="Suzuki Y."/>
            <person name="Nishikawa T."/>
            <person name="Otsuki T."/>
            <person name="Sugiyama T."/>
            <person name="Irie R."/>
            <person name="Wakamatsu A."/>
            <person name="Hayashi K."/>
            <person name="Sato H."/>
            <person name="Nagai K."/>
            <person name="Kimura K."/>
            <person name="Makita H."/>
            <person name="Sekine M."/>
            <person name="Obayashi M."/>
            <person name="Nishi T."/>
            <person name="Shibahara T."/>
            <person name="Tanaka T."/>
            <person name="Ishii S."/>
            <person name="Yamamoto J."/>
            <person name="Saito K."/>
            <person name="Kawai Y."/>
            <person name="Isono Y."/>
            <person name="Nakamura Y."/>
            <person name="Nagahari K."/>
            <person name="Murakami K."/>
            <person name="Yasuda T."/>
            <person name="Iwayanagi T."/>
            <person name="Wagatsuma M."/>
            <person name="Shiratori A."/>
            <person name="Sudo H."/>
            <person name="Hosoiri T."/>
            <person name="Kaku Y."/>
            <person name="Kodaira H."/>
            <person name="Kondo H."/>
            <person name="Sugawara M."/>
            <person name="Takahashi M."/>
            <person name="Kanda K."/>
            <person name="Yokoi T."/>
            <person name="Furuya T."/>
            <person name="Kikkawa E."/>
            <person name="Omura Y."/>
            <person name="Abe K."/>
            <person name="Kamihara K."/>
            <person name="Katsuta N."/>
            <person name="Sato K."/>
            <person name="Tanikawa M."/>
            <person name="Yamazaki M."/>
            <person name="Ninomiya K."/>
            <person name="Ishibashi T."/>
            <person name="Yamashita H."/>
            <person name="Murakawa K."/>
            <person name="Fujimori K."/>
            <person name="Tanai H."/>
            <person name="Kimata M."/>
            <person name="Watanabe M."/>
            <person name="Hiraoka S."/>
            <person name="Chiba Y."/>
            <person name="Ishida S."/>
            <person name="Ono Y."/>
            <person name="Takiguchi S."/>
            <person name="Watanabe S."/>
            <person name="Yosida M."/>
            <person name="Hotuta T."/>
            <person name="Kusano J."/>
            <person name="Kanehori K."/>
            <person name="Takahashi-Fujii A."/>
            <person name="Hara H."/>
            <person name="Tanase T.-O."/>
            <person name="Nomura Y."/>
            <person name="Togiya S."/>
            <person name="Komai F."/>
            <person name="Hara R."/>
            <person name="Takeuchi K."/>
            <person name="Arita M."/>
            <person name="Imose N."/>
            <person name="Musashino K."/>
            <person name="Yuuki H."/>
            <person name="Oshima A."/>
            <person name="Sasaki N."/>
            <person name="Aotsuka S."/>
            <person name="Yoshikawa Y."/>
            <person name="Matsunawa H."/>
            <person name="Ichihara T."/>
            <person name="Shiohata N."/>
            <person name="Sano S."/>
            <person name="Moriya S."/>
            <person name="Momiyama H."/>
            <person name="Satoh N."/>
            <person name="Takami S."/>
            <person name="Terashima Y."/>
            <person name="Suzuki O."/>
            <person name="Nakagawa S."/>
            <person name="Senoh A."/>
            <person name="Mizoguchi H."/>
            <person name="Goto Y."/>
            <person name="Shimizu F."/>
            <person name="Wakebe H."/>
            <person name="Hishigaki H."/>
            <person name="Watanabe T."/>
            <person name="Sugiyama A."/>
            <person name="Takemoto M."/>
            <person name="Kawakami B."/>
            <person name="Yamazaki M."/>
            <person name="Watanabe K."/>
            <person name="Kumagai A."/>
            <person name="Itakura S."/>
            <person name="Fukuzumi Y."/>
            <person name="Fujimori Y."/>
            <person name="Komiyama M."/>
            <person name="Tashiro H."/>
            <person name="Tanigami A."/>
            <person name="Fujiwara T."/>
            <person name="Ono T."/>
            <person name="Yamada K."/>
            <person name="Fujii Y."/>
            <person name="Ozaki K."/>
            <person name="Hirao M."/>
            <person name="Ohmori Y."/>
            <person name="Kawabata A."/>
            <person name="Hikiji T."/>
            <person name="Kobatake N."/>
            <person name="Inagaki H."/>
            <person name="Ikema Y."/>
            <person name="Okamoto S."/>
            <person name="Okitani R."/>
            <person name="Kawakami T."/>
            <person name="Noguchi S."/>
            <person name="Itoh T."/>
            <person name="Shigeta K."/>
            <person name="Senba T."/>
            <person name="Matsumura K."/>
            <person name="Nakajima Y."/>
            <person name="Mizuno T."/>
            <person name="Morinaga M."/>
            <person name="Sasaki M."/>
            <person name="Togashi T."/>
            <person name="Oyama M."/>
            <person name="Hata H."/>
            <person name="Watanabe M."/>
            <person name="Komatsu T."/>
            <person name="Mizushima-Sugano J."/>
            <person name="Satoh T."/>
            <person name="Shirai Y."/>
            <person name="Takahashi Y."/>
            <person name="Nakagawa K."/>
            <person name="Okumura K."/>
            <person name="Nagase T."/>
            <person name="Nomura N."/>
            <person name="Kikuchi H."/>
            <person name="Masuho Y."/>
            <person name="Yamashita R."/>
            <person name="Nakai K."/>
            <person name="Yada T."/>
            <person name="Nakamura Y."/>
            <person name="Ohara O."/>
            <person name="Isogai T."/>
            <person name="Sugano S."/>
        </authorList>
    </citation>
    <scope>NUCLEOTIDE SEQUENCE [LARGE SCALE MRNA]</scope>
    <source>
        <tissue>Placenta</tissue>
    </source>
</reference>
<reference key="4">
    <citation type="journal article" date="2004" name="Genome Res.">
        <title>The status, quality, and expansion of the NIH full-length cDNA project: the Mammalian Gene Collection (MGC).</title>
        <authorList>
            <consortium name="The MGC Project Team"/>
        </authorList>
    </citation>
    <scope>NUCLEOTIDE SEQUENCE [LARGE SCALE MRNA]</scope>
    <source>
        <tissue>Skin</tissue>
    </source>
</reference>
<reference key="5">
    <citation type="journal article" date="2007" name="Science">
        <title>SCFFbxl3 controls the oscillation of the circadian clock by directing the degradation of cryptochrome proteins.</title>
        <authorList>
            <person name="Busino L."/>
            <person name="Bassermann F."/>
            <person name="Maiolica A."/>
            <person name="Lee C."/>
            <person name="Nolan P.M."/>
            <person name="Godinho S.I."/>
            <person name="Draetta G.F."/>
            <person name="Pagano M."/>
        </authorList>
    </citation>
    <scope>FUNCTION IN CIRCADIAN CLOCK</scope>
    <scope>INTERACTION WITH CRY1 AND CRY2</scope>
    <scope>MUTAGENESIS OF CYS-358</scope>
</reference>
<reference key="6">
    <citation type="journal article" date="2013" name="Cell">
        <title>Competing E3 ubiquitin ligases govern circadian periodicity by degradation of CRY in nucleus and cytoplasm.</title>
        <authorList>
            <person name="Yoo S.H."/>
            <person name="Mohawk J.A."/>
            <person name="Siepka S.M."/>
            <person name="Shan Y."/>
            <person name="Huh S.K."/>
            <person name="Hong H.K."/>
            <person name="Kornblum I."/>
            <person name="Kumar V."/>
            <person name="Koike N."/>
            <person name="Xu M."/>
            <person name="Nussbaum J."/>
            <person name="Liu X."/>
            <person name="Chen Z."/>
            <person name="Chen Z.J."/>
            <person name="Green C.B."/>
            <person name="Takahashi J.S."/>
        </authorList>
    </citation>
    <scope>FUNCTION IN CIRCADIAN CLOCK</scope>
</reference>
<reference key="7">
    <citation type="journal article" date="2016" name="Cell">
        <title>Two distinct types of E3 ligases work in unison to regulate substrate ubiquitylation.</title>
        <authorList>
            <person name="Scott D.C."/>
            <person name="Rhee D.Y."/>
            <person name="Duda D.M."/>
            <person name="Kelsall I.R."/>
            <person name="Olszewski J.L."/>
            <person name="Paulo J.A."/>
            <person name="de Jong A."/>
            <person name="Ovaa H."/>
            <person name="Alpi A.F."/>
            <person name="Harper J.W."/>
            <person name="Schulman B.A."/>
        </authorList>
    </citation>
    <scope>FUNCTION</scope>
</reference>
<reference key="8">
    <citation type="journal article" date="2019" name="Hum. Mol. Genet.">
        <title>Biallelic variants in FBXL3 cause intellectual disability, delayed motor development and short stature.</title>
        <authorList>
            <person name="Ansar M."/>
            <person name="Paracha S.A."/>
            <person name="Serretti A."/>
            <person name="Sarwar M.T."/>
            <person name="Khan J."/>
            <person name="Ranza E."/>
            <person name="Falconnet E."/>
            <person name="Iwaszkiewicz J."/>
            <person name="Shah S.F."/>
            <person name="Qaisar A.A."/>
            <person name="Santoni F.A."/>
            <person name="Zoete V."/>
            <person name="Megarbane A."/>
            <person name="Ahmed J."/>
            <person name="Colombo R."/>
            <person name="Makrythanasis P."/>
            <person name="Antonarakis S.E."/>
        </authorList>
    </citation>
    <scope>INVOLVEMENT IN IDDSFAS</scope>
    <scope>VARIANTS IDDSFAS 149-ARG--TRP-428 DEL AND ARG-358</scope>
</reference>
<comment type="function">
    <text evidence="4 5 6">Substrate-recognition component of the SCF(FBXL3) E3 ubiquitin ligase complex involved in circadian rhythm function. Plays a key role in the maintenance of both the speed and the robustness of the circadian clock oscillation (PubMed:17463251, PubMed:23452855, PubMed:27565346). The SCF(FBXL3) complex mainly acts in the nucleus and mediates ubiquitination and subsequent degradation of CRY1 and CRY2 (PubMed:17463251, PubMed:23452855, PubMed:27565346). Activity of the SCF(FBXL3) complex is counteracted by the SCF(FBXL21) complex (PubMed:23452855).</text>
</comment>
<comment type="pathway">
    <text>Protein modification; protein ubiquitination.</text>
</comment>
<comment type="subunit">
    <text evidence="1 4">Part of the SCF (SKP1-CUL1-F-box) E3 ubiquitin-protein ligase complex SCF(FBXL3) composed of CUL1, SKP1, RBX1 and FBXL3 (By similarity). Interacts with CRY1 and CRY2 (phosphorylated) (PubMed:17463251). Interacts with HDAC3 (By similarity). Interacts with KDM8 (By similarity).</text>
</comment>
<comment type="interaction">
    <interactant intactId="EBI-2557269">
        <id>Q9UKT7</id>
    </interactant>
    <interactant intactId="EBI-11752486">
        <id>Q86XR8-3</id>
        <label>CEP57</label>
    </interactant>
    <organismsDiffer>false</organismsDiffer>
    <experiments>3</experiments>
</comment>
<comment type="interaction">
    <interactant intactId="EBI-2557269">
        <id>Q9UKT7</id>
    </interactant>
    <interactant intactId="EBI-19157918">
        <id>Q9UJ68</id>
        <label>MSRA</label>
    </interactant>
    <organismsDiffer>false</organismsDiffer>
    <experiments>3</experiments>
</comment>
<comment type="interaction">
    <interactant intactId="EBI-2557269">
        <id>Q9UKT7</id>
    </interactant>
    <interactant intactId="EBI-79165">
        <id>Q9NRD5</id>
        <label>PICK1</label>
    </interactant>
    <organismsDiffer>false</organismsDiffer>
    <experiments>3</experiments>
</comment>
<comment type="interaction">
    <interactant intactId="EBI-2557269">
        <id>Q9UKT7</id>
    </interactant>
    <interactant intactId="EBI-1266619">
        <id>Q9R194</id>
        <label>Cry2</label>
    </interactant>
    <organismsDiffer>true</organismsDiffer>
    <experiments>13</experiments>
</comment>
<comment type="interaction">
    <interactant intactId="EBI-2557269">
        <id>Q9UKT7</id>
    </interactant>
    <interactant intactId="EBI-1202363">
        <id>Q9WTX5</id>
        <label>Skp1</label>
    </interactant>
    <organismsDiffer>true</organismsDiffer>
    <experiments>4</experiments>
</comment>
<comment type="subcellular location">
    <subcellularLocation>
        <location evidence="3">Nucleus</location>
    </subcellularLocation>
    <subcellularLocation>
        <location evidence="3">Cytoplasm</location>
    </subcellularLocation>
    <text>Predominantly nuclear.</text>
</comment>
<comment type="tissue specificity">
    <text evidence="3">Widely expressed.</text>
</comment>
<comment type="PTM">
    <text evidence="1">Undergoes autophagy-mediated degradation in the liver in a time-dependent manner.</text>
</comment>
<comment type="disease" evidence="7">
    <disease id="DI-05547">
        <name>Intellectual developmental disorder with short stature, facial anomalies, and speech defects</name>
        <acronym>IDDSFAS</acronym>
        <description>An autosomal recessive disorder characterized by global developmental delay, mildly to severely impaired intellectual development, delayed or slurred speech, and short stature. Dysmorphic features included a large bulbous nose and variable microretrognathia. Some patients show joint hyperlaxity and dislocations.</description>
        <dbReference type="MIM" id="606220"/>
    </disease>
    <text>The disease is caused by variants affecting the gene represented in this entry.</text>
</comment>
<evidence type="ECO:0000250" key="1">
    <source>
        <dbReference type="UniProtKB" id="Q8C4V4"/>
    </source>
</evidence>
<evidence type="ECO:0000256" key="2">
    <source>
        <dbReference type="SAM" id="MobiDB-lite"/>
    </source>
</evidence>
<evidence type="ECO:0000269" key="3">
    <source>
    </source>
</evidence>
<evidence type="ECO:0000269" key="4">
    <source>
    </source>
</evidence>
<evidence type="ECO:0000269" key="5">
    <source>
    </source>
</evidence>
<evidence type="ECO:0000269" key="6">
    <source>
    </source>
</evidence>
<evidence type="ECO:0000269" key="7">
    <source>
    </source>
</evidence>
<evidence type="ECO:0000305" key="8"/>
<evidence type="ECO:0007829" key="9">
    <source>
        <dbReference type="PDB" id="4I6J"/>
    </source>
</evidence>